<sequence>MAQVKRIRRNVSGIILLDKPLGFTSNAALQKVRWLLNAEKAGHTGSLDPLATGVLPLCFGEATKFSQYLLDSDKGYETLAQLGKTTTTADAEGEVLQTREVTVGRADIEAVLPEFRGEIKQIPPMYSALKRDGQPLYKLARAGEVVEREPRSVTIARLELLAFEGDTARLAVDCSKGTYIRTLVEDIGEKLGCGAYVAELRRTQAGPFSLAQTVTLEELEAVHAEGGNEAVDRFLMPSDSGLLDWPLLQFSEHSAFYWLNGQPVRAPDAPKFGMVRVQDHNGRFIGIGEVSEDGRIAPRRLIRSE</sequence>
<keyword id="KW-0413">Isomerase</keyword>
<keyword id="KW-0819">tRNA processing</keyword>
<evidence type="ECO:0000255" key="1">
    <source>
        <dbReference type="HAMAP-Rule" id="MF_01080"/>
    </source>
</evidence>
<organism>
    <name type="scientific">Pseudomonas fluorescens (strain ATCC BAA-477 / NRRL B-23932 / Pf-5)</name>
    <dbReference type="NCBI Taxonomy" id="220664"/>
    <lineage>
        <taxon>Bacteria</taxon>
        <taxon>Pseudomonadati</taxon>
        <taxon>Pseudomonadota</taxon>
        <taxon>Gammaproteobacteria</taxon>
        <taxon>Pseudomonadales</taxon>
        <taxon>Pseudomonadaceae</taxon>
        <taxon>Pseudomonas</taxon>
    </lineage>
</organism>
<gene>
    <name evidence="1" type="primary">truB</name>
    <name type="ordered locus">PFL_0846</name>
</gene>
<comment type="function">
    <text evidence="1">Responsible for synthesis of pseudouridine from uracil-55 in the psi GC loop of transfer RNAs.</text>
</comment>
<comment type="catalytic activity">
    <reaction evidence="1">
        <text>uridine(55) in tRNA = pseudouridine(55) in tRNA</text>
        <dbReference type="Rhea" id="RHEA:42532"/>
        <dbReference type="Rhea" id="RHEA-COMP:10101"/>
        <dbReference type="Rhea" id="RHEA-COMP:10102"/>
        <dbReference type="ChEBI" id="CHEBI:65314"/>
        <dbReference type="ChEBI" id="CHEBI:65315"/>
        <dbReference type="EC" id="5.4.99.25"/>
    </reaction>
</comment>
<comment type="similarity">
    <text evidence="1">Belongs to the pseudouridine synthase TruB family. Type 1 subfamily.</text>
</comment>
<feature type="chain" id="PRO_0000229371" description="tRNA pseudouridine synthase B">
    <location>
        <begin position="1"/>
        <end position="305"/>
    </location>
</feature>
<feature type="active site" description="Nucleophile" evidence="1">
    <location>
        <position position="48"/>
    </location>
</feature>
<name>TRUB_PSEF5</name>
<reference key="1">
    <citation type="journal article" date="2005" name="Nat. Biotechnol.">
        <title>Complete genome sequence of the plant commensal Pseudomonas fluorescens Pf-5.</title>
        <authorList>
            <person name="Paulsen I.T."/>
            <person name="Press C.M."/>
            <person name="Ravel J."/>
            <person name="Kobayashi D.Y."/>
            <person name="Myers G.S.A."/>
            <person name="Mavrodi D.V."/>
            <person name="DeBoy R.T."/>
            <person name="Seshadri R."/>
            <person name="Ren Q."/>
            <person name="Madupu R."/>
            <person name="Dodson R.J."/>
            <person name="Durkin A.S."/>
            <person name="Brinkac L.M."/>
            <person name="Daugherty S.C."/>
            <person name="Sullivan S.A."/>
            <person name="Rosovitz M.J."/>
            <person name="Gwinn M.L."/>
            <person name="Zhou L."/>
            <person name="Schneider D.J."/>
            <person name="Cartinhour S.W."/>
            <person name="Nelson W.C."/>
            <person name="Weidman J."/>
            <person name="Watkins K."/>
            <person name="Tran K."/>
            <person name="Khouri H."/>
            <person name="Pierson E.A."/>
            <person name="Pierson L.S. III"/>
            <person name="Thomashow L.S."/>
            <person name="Loper J.E."/>
        </authorList>
    </citation>
    <scope>NUCLEOTIDE SEQUENCE [LARGE SCALE GENOMIC DNA]</scope>
    <source>
        <strain>ATCC BAA-477 / NRRL B-23932 / Pf-5</strain>
    </source>
</reference>
<proteinExistence type="inferred from homology"/>
<dbReference type="EC" id="5.4.99.25" evidence="1"/>
<dbReference type="EMBL" id="CP000076">
    <property type="protein sequence ID" value="AAY96244.1"/>
    <property type="molecule type" value="Genomic_DNA"/>
</dbReference>
<dbReference type="RefSeq" id="WP_011059204.1">
    <property type="nucleotide sequence ID" value="NC_004129.6"/>
</dbReference>
<dbReference type="SMR" id="Q4KIF4"/>
<dbReference type="STRING" id="220664.PFL_0846"/>
<dbReference type="GeneID" id="57473847"/>
<dbReference type="KEGG" id="pfl:PFL_0846"/>
<dbReference type="PATRIC" id="fig|220664.5.peg.866"/>
<dbReference type="eggNOG" id="COG0130">
    <property type="taxonomic scope" value="Bacteria"/>
</dbReference>
<dbReference type="HOGENOM" id="CLU_032087_0_3_6"/>
<dbReference type="Proteomes" id="UP000008540">
    <property type="component" value="Chromosome"/>
</dbReference>
<dbReference type="GO" id="GO:0003723">
    <property type="term" value="F:RNA binding"/>
    <property type="evidence" value="ECO:0007669"/>
    <property type="project" value="InterPro"/>
</dbReference>
<dbReference type="GO" id="GO:0160148">
    <property type="term" value="F:tRNA pseudouridine(55) synthase activity"/>
    <property type="evidence" value="ECO:0007669"/>
    <property type="project" value="UniProtKB-EC"/>
</dbReference>
<dbReference type="GO" id="GO:1990481">
    <property type="term" value="P:mRNA pseudouridine synthesis"/>
    <property type="evidence" value="ECO:0007669"/>
    <property type="project" value="TreeGrafter"/>
</dbReference>
<dbReference type="GO" id="GO:0031119">
    <property type="term" value="P:tRNA pseudouridine synthesis"/>
    <property type="evidence" value="ECO:0007669"/>
    <property type="project" value="UniProtKB-UniRule"/>
</dbReference>
<dbReference type="CDD" id="cd02573">
    <property type="entry name" value="PseudoU_synth_EcTruB"/>
    <property type="match status" value="1"/>
</dbReference>
<dbReference type="CDD" id="cd21152">
    <property type="entry name" value="PUA_TruB_bacterial"/>
    <property type="match status" value="1"/>
</dbReference>
<dbReference type="FunFam" id="2.30.130.10:FF:000012">
    <property type="entry name" value="tRNA pseudouridine synthase B"/>
    <property type="match status" value="1"/>
</dbReference>
<dbReference type="FunFam" id="3.30.2350.10:FF:000011">
    <property type="entry name" value="tRNA pseudouridine synthase B"/>
    <property type="match status" value="1"/>
</dbReference>
<dbReference type="Gene3D" id="3.30.2350.10">
    <property type="entry name" value="Pseudouridine synthase"/>
    <property type="match status" value="1"/>
</dbReference>
<dbReference type="Gene3D" id="2.30.130.10">
    <property type="entry name" value="PUA domain"/>
    <property type="match status" value="1"/>
</dbReference>
<dbReference type="HAMAP" id="MF_01080">
    <property type="entry name" value="TruB_bact"/>
    <property type="match status" value="1"/>
</dbReference>
<dbReference type="InterPro" id="IPR020103">
    <property type="entry name" value="PsdUridine_synth_cat_dom_sf"/>
</dbReference>
<dbReference type="InterPro" id="IPR002501">
    <property type="entry name" value="PsdUridine_synth_N"/>
</dbReference>
<dbReference type="InterPro" id="IPR015947">
    <property type="entry name" value="PUA-like_sf"/>
</dbReference>
<dbReference type="InterPro" id="IPR036974">
    <property type="entry name" value="PUA_sf"/>
</dbReference>
<dbReference type="InterPro" id="IPR014780">
    <property type="entry name" value="tRNA_psdUridine_synth_TruB"/>
</dbReference>
<dbReference type="InterPro" id="IPR015240">
    <property type="entry name" value="tRNA_sdUridine_synth_fam1_C"/>
</dbReference>
<dbReference type="InterPro" id="IPR032819">
    <property type="entry name" value="TruB_C"/>
</dbReference>
<dbReference type="NCBIfam" id="TIGR00431">
    <property type="entry name" value="TruB"/>
    <property type="match status" value="1"/>
</dbReference>
<dbReference type="PANTHER" id="PTHR13767:SF2">
    <property type="entry name" value="PSEUDOURIDYLATE SYNTHASE TRUB1"/>
    <property type="match status" value="1"/>
</dbReference>
<dbReference type="PANTHER" id="PTHR13767">
    <property type="entry name" value="TRNA-PSEUDOURIDINE SYNTHASE"/>
    <property type="match status" value="1"/>
</dbReference>
<dbReference type="Pfam" id="PF09157">
    <property type="entry name" value="TruB-C_2"/>
    <property type="match status" value="1"/>
</dbReference>
<dbReference type="Pfam" id="PF16198">
    <property type="entry name" value="TruB_C_2"/>
    <property type="match status" value="1"/>
</dbReference>
<dbReference type="Pfam" id="PF01509">
    <property type="entry name" value="TruB_N"/>
    <property type="match status" value="1"/>
</dbReference>
<dbReference type="SUPFAM" id="SSF55120">
    <property type="entry name" value="Pseudouridine synthase"/>
    <property type="match status" value="1"/>
</dbReference>
<dbReference type="SUPFAM" id="SSF88697">
    <property type="entry name" value="PUA domain-like"/>
    <property type="match status" value="1"/>
</dbReference>
<protein>
    <recommendedName>
        <fullName evidence="1">tRNA pseudouridine synthase B</fullName>
        <ecNumber evidence="1">5.4.99.25</ecNumber>
    </recommendedName>
    <alternativeName>
        <fullName evidence="1">tRNA pseudouridine(55) synthase</fullName>
        <shortName evidence="1">Psi55 synthase</shortName>
    </alternativeName>
    <alternativeName>
        <fullName evidence="1">tRNA pseudouridylate synthase</fullName>
    </alternativeName>
    <alternativeName>
        <fullName evidence="1">tRNA-uridine isomerase</fullName>
    </alternativeName>
</protein>
<accession>Q4KIF4</accession>